<proteinExistence type="inferred from homology"/>
<protein>
    <recommendedName>
        <fullName evidence="1">Large ribosomal subunit protein bL35</fullName>
    </recommendedName>
    <alternativeName>
        <fullName evidence="2">50S ribosomal protein L35</fullName>
    </alternativeName>
</protein>
<accession>B0TEV3</accession>
<organism>
    <name type="scientific">Heliobacterium modesticaldum (strain ATCC 51547 / Ice1)</name>
    <dbReference type="NCBI Taxonomy" id="498761"/>
    <lineage>
        <taxon>Bacteria</taxon>
        <taxon>Bacillati</taxon>
        <taxon>Bacillota</taxon>
        <taxon>Clostridia</taxon>
        <taxon>Eubacteriales</taxon>
        <taxon>Heliobacteriaceae</taxon>
        <taxon>Heliomicrobium</taxon>
    </lineage>
</organism>
<sequence length="65" mass="7465">MPKMKTHRGAAKRFKKTASGKFKAKNAFTRHILEKKSAKRKRQLRGTAVVAKEDTPKLKELLPYL</sequence>
<name>RL35_HELMI</name>
<dbReference type="EMBL" id="CP000930">
    <property type="protein sequence ID" value="ABZ84355.1"/>
    <property type="molecule type" value="Genomic_DNA"/>
</dbReference>
<dbReference type="RefSeq" id="WP_012282859.1">
    <property type="nucleotide sequence ID" value="NC_010337.2"/>
</dbReference>
<dbReference type="SMR" id="B0TEV3"/>
<dbReference type="STRING" id="498761.HM1_1790"/>
<dbReference type="KEGG" id="hmo:HM1_1790"/>
<dbReference type="eggNOG" id="COG0291">
    <property type="taxonomic scope" value="Bacteria"/>
</dbReference>
<dbReference type="HOGENOM" id="CLU_169643_3_0_9"/>
<dbReference type="OrthoDB" id="47476at2"/>
<dbReference type="Proteomes" id="UP000008550">
    <property type="component" value="Chromosome"/>
</dbReference>
<dbReference type="GO" id="GO:0022625">
    <property type="term" value="C:cytosolic large ribosomal subunit"/>
    <property type="evidence" value="ECO:0007669"/>
    <property type="project" value="TreeGrafter"/>
</dbReference>
<dbReference type="GO" id="GO:0003735">
    <property type="term" value="F:structural constituent of ribosome"/>
    <property type="evidence" value="ECO:0007669"/>
    <property type="project" value="InterPro"/>
</dbReference>
<dbReference type="GO" id="GO:0006412">
    <property type="term" value="P:translation"/>
    <property type="evidence" value="ECO:0007669"/>
    <property type="project" value="UniProtKB-UniRule"/>
</dbReference>
<dbReference type="FunFam" id="4.10.410.60:FF:000001">
    <property type="entry name" value="50S ribosomal protein L35"/>
    <property type="match status" value="1"/>
</dbReference>
<dbReference type="Gene3D" id="4.10.410.60">
    <property type="match status" value="1"/>
</dbReference>
<dbReference type="HAMAP" id="MF_00514">
    <property type="entry name" value="Ribosomal_bL35"/>
    <property type="match status" value="1"/>
</dbReference>
<dbReference type="InterPro" id="IPR001706">
    <property type="entry name" value="Ribosomal_bL35"/>
</dbReference>
<dbReference type="InterPro" id="IPR021137">
    <property type="entry name" value="Ribosomal_bL35-like"/>
</dbReference>
<dbReference type="InterPro" id="IPR018265">
    <property type="entry name" value="Ribosomal_bL35_CS"/>
</dbReference>
<dbReference type="InterPro" id="IPR037229">
    <property type="entry name" value="Ribosomal_bL35_sf"/>
</dbReference>
<dbReference type="NCBIfam" id="TIGR00001">
    <property type="entry name" value="rpmI_bact"/>
    <property type="match status" value="1"/>
</dbReference>
<dbReference type="PANTHER" id="PTHR33343">
    <property type="entry name" value="54S RIBOSOMAL PROTEIN BL35M"/>
    <property type="match status" value="1"/>
</dbReference>
<dbReference type="PANTHER" id="PTHR33343:SF1">
    <property type="entry name" value="LARGE RIBOSOMAL SUBUNIT PROTEIN BL35M"/>
    <property type="match status" value="1"/>
</dbReference>
<dbReference type="Pfam" id="PF01632">
    <property type="entry name" value="Ribosomal_L35p"/>
    <property type="match status" value="1"/>
</dbReference>
<dbReference type="PRINTS" id="PR00064">
    <property type="entry name" value="RIBOSOMALL35"/>
</dbReference>
<dbReference type="SUPFAM" id="SSF143034">
    <property type="entry name" value="L35p-like"/>
    <property type="match status" value="1"/>
</dbReference>
<dbReference type="PROSITE" id="PS00936">
    <property type="entry name" value="RIBOSOMAL_L35"/>
    <property type="match status" value="1"/>
</dbReference>
<evidence type="ECO:0000255" key="1">
    <source>
        <dbReference type="HAMAP-Rule" id="MF_00514"/>
    </source>
</evidence>
<evidence type="ECO:0000305" key="2"/>
<gene>
    <name evidence="1" type="primary">rpmI</name>
    <name type="ordered locus">Helmi_17300</name>
    <name type="ORF">HM1_1790</name>
</gene>
<keyword id="KW-1185">Reference proteome</keyword>
<keyword id="KW-0687">Ribonucleoprotein</keyword>
<keyword id="KW-0689">Ribosomal protein</keyword>
<comment type="similarity">
    <text evidence="1">Belongs to the bacterial ribosomal protein bL35 family.</text>
</comment>
<reference key="1">
    <citation type="journal article" date="2008" name="J. Bacteriol.">
        <title>The genome of Heliobacterium modesticaldum, a phototrophic representative of the Firmicutes containing the simplest photosynthetic apparatus.</title>
        <authorList>
            <person name="Sattley W.M."/>
            <person name="Madigan M.T."/>
            <person name="Swingley W.D."/>
            <person name="Cheung P.C."/>
            <person name="Clocksin K.M."/>
            <person name="Conrad A.L."/>
            <person name="Dejesa L.C."/>
            <person name="Honchak B.M."/>
            <person name="Jung D.O."/>
            <person name="Karbach L.E."/>
            <person name="Kurdoglu A."/>
            <person name="Lahiri S."/>
            <person name="Mastrian S.D."/>
            <person name="Page L.E."/>
            <person name="Taylor H.L."/>
            <person name="Wang Z.T."/>
            <person name="Raymond J."/>
            <person name="Chen M."/>
            <person name="Blankenship R.E."/>
            <person name="Touchman J.W."/>
        </authorList>
    </citation>
    <scope>NUCLEOTIDE SEQUENCE [LARGE SCALE GENOMIC DNA]</scope>
    <source>
        <strain>ATCC 51547 / Ice1</strain>
    </source>
</reference>
<feature type="chain" id="PRO_1000127360" description="Large ribosomal subunit protein bL35">
    <location>
        <begin position="1"/>
        <end position="65"/>
    </location>
</feature>